<protein>
    <recommendedName>
        <fullName evidence="1">Translational regulator CsrA</fullName>
    </recommendedName>
</protein>
<accession>Q7VJW9</accession>
<sequence>MLILSRKQDDSVIIGDDIEIKIISIDKGSVRLGFSAPENCVILRGELKEAITSQNKQASQSDDIKAVSEIKFLLKAHKK</sequence>
<keyword id="KW-1005">Bacterial flagellum biogenesis</keyword>
<keyword id="KW-0963">Cytoplasm</keyword>
<keyword id="KW-1185">Reference proteome</keyword>
<keyword id="KW-0678">Repressor</keyword>
<keyword id="KW-0694">RNA-binding</keyword>
<keyword id="KW-0810">Translation regulation</keyword>
<organism>
    <name type="scientific">Helicobacter hepaticus (strain ATCC 51449 / 3B1)</name>
    <dbReference type="NCBI Taxonomy" id="235279"/>
    <lineage>
        <taxon>Bacteria</taxon>
        <taxon>Pseudomonadati</taxon>
        <taxon>Campylobacterota</taxon>
        <taxon>Epsilonproteobacteria</taxon>
        <taxon>Campylobacterales</taxon>
        <taxon>Helicobacteraceae</taxon>
        <taxon>Helicobacter</taxon>
    </lineage>
</organism>
<dbReference type="EMBL" id="AE017125">
    <property type="protein sequence ID" value="AAP76720.1"/>
    <property type="molecule type" value="Genomic_DNA"/>
</dbReference>
<dbReference type="RefSeq" id="WP_011114966.1">
    <property type="nucleotide sequence ID" value="NC_004917.1"/>
</dbReference>
<dbReference type="SMR" id="Q7VJW9"/>
<dbReference type="STRING" id="235279.HH_0123"/>
<dbReference type="KEGG" id="hhe:HH_0123"/>
<dbReference type="eggNOG" id="COG1551">
    <property type="taxonomic scope" value="Bacteria"/>
</dbReference>
<dbReference type="HOGENOM" id="CLU_164837_0_0_7"/>
<dbReference type="OrthoDB" id="9809061at2"/>
<dbReference type="Proteomes" id="UP000002495">
    <property type="component" value="Chromosome"/>
</dbReference>
<dbReference type="GO" id="GO:0005829">
    <property type="term" value="C:cytosol"/>
    <property type="evidence" value="ECO:0007669"/>
    <property type="project" value="TreeGrafter"/>
</dbReference>
<dbReference type="GO" id="GO:0048027">
    <property type="term" value="F:mRNA 5'-UTR binding"/>
    <property type="evidence" value="ECO:0007669"/>
    <property type="project" value="UniProtKB-UniRule"/>
</dbReference>
<dbReference type="GO" id="GO:0044781">
    <property type="term" value="P:bacterial-type flagellum organization"/>
    <property type="evidence" value="ECO:0007669"/>
    <property type="project" value="UniProtKB-KW"/>
</dbReference>
<dbReference type="GO" id="GO:0006402">
    <property type="term" value="P:mRNA catabolic process"/>
    <property type="evidence" value="ECO:0007669"/>
    <property type="project" value="InterPro"/>
</dbReference>
<dbReference type="GO" id="GO:0045947">
    <property type="term" value="P:negative regulation of translational initiation"/>
    <property type="evidence" value="ECO:0007669"/>
    <property type="project" value="UniProtKB-UniRule"/>
</dbReference>
<dbReference type="GO" id="GO:1902208">
    <property type="term" value="P:regulation of bacterial-type flagellum assembly"/>
    <property type="evidence" value="ECO:0007669"/>
    <property type="project" value="UniProtKB-UniRule"/>
</dbReference>
<dbReference type="GO" id="GO:0006109">
    <property type="term" value="P:regulation of carbohydrate metabolic process"/>
    <property type="evidence" value="ECO:0007669"/>
    <property type="project" value="InterPro"/>
</dbReference>
<dbReference type="FunFam" id="2.60.40.4380:FF:000002">
    <property type="entry name" value="Translational regulator CsrA"/>
    <property type="match status" value="1"/>
</dbReference>
<dbReference type="Gene3D" id="2.60.40.4380">
    <property type="entry name" value="Translational regulator CsrA"/>
    <property type="match status" value="1"/>
</dbReference>
<dbReference type="HAMAP" id="MF_00167">
    <property type="entry name" value="CsrA"/>
    <property type="match status" value="1"/>
</dbReference>
<dbReference type="InterPro" id="IPR003751">
    <property type="entry name" value="CsrA"/>
</dbReference>
<dbReference type="InterPro" id="IPR036107">
    <property type="entry name" value="CsrA_sf"/>
</dbReference>
<dbReference type="NCBIfam" id="TIGR00202">
    <property type="entry name" value="csrA"/>
    <property type="match status" value="1"/>
</dbReference>
<dbReference type="NCBIfam" id="NF001844">
    <property type="entry name" value="PRK00568.1"/>
    <property type="match status" value="1"/>
</dbReference>
<dbReference type="PANTHER" id="PTHR34984">
    <property type="entry name" value="CARBON STORAGE REGULATOR"/>
    <property type="match status" value="1"/>
</dbReference>
<dbReference type="PANTHER" id="PTHR34984:SF1">
    <property type="entry name" value="CARBON STORAGE REGULATOR"/>
    <property type="match status" value="1"/>
</dbReference>
<dbReference type="Pfam" id="PF02599">
    <property type="entry name" value="CsrA"/>
    <property type="match status" value="1"/>
</dbReference>
<dbReference type="SUPFAM" id="SSF117130">
    <property type="entry name" value="CsrA-like"/>
    <property type="match status" value="1"/>
</dbReference>
<reference key="1">
    <citation type="journal article" date="2003" name="Proc. Natl. Acad. Sci. U.S.A.">
        <title>The complete genome sequence of the carcinogenic bacterium Helicobacter hepaticus.</title>
        <authorList>
            <person name="Suerbaum S."/>
            <person name="Josenhans C."/>
            <person name="Sterzenbach T."/>
            <person name="Drescher B."/>
            <person name="Brandt P."/>
            <person name="Bell M."/>
            <person name="Droege M."/>
            <person name="Fartmann B."/>
            <person name="Fischer H.-P."/>
            <person name="Ge Z."/>
            <person name="Hoerster A."/>
            <person name="Holland R."/>
            <person name="Klein K."/>
            <person name="Koenig J."/>
            <person name="Macko L."/>
            <person name="Mendz G.L."/>
            <person name="Nyakatura G."/>
            <person name="Schauer D.B."/>
            <person name="Shen Z."/>
            <person name="Weber J."/>
            <person name="Frosch M."/>
            <person name="Fox J.G."/>
        </authorList>
    </citation>
    <scope>NUCLEOTIDE SEQUENCE [LARGE SCALE GENOMIC DNA]</scope>
    <source>
        <strain>ATCC 51449 / 3B1</strain>
    </source>
</reference>
<gene>
    <name evidence="1" type="primary">csrA</name>
    <name type="ordered locus">HH_0123</name>
</gene>
<proteinExistence type="inferred from homology"/>
<comment type="function">
    <text evidence="1">A translational regulator that binds mRNA to regulate translation initiation and/or mRNA stability. Usually binds in the 5'-UTR at or near the Shine-Dalgarno sequence preventing ribosome-binding, thus repressing translation. Its main target seems to be the major flagellin gene, while its function is anatagonized by FliW.</text>
</comment>
<comment type="subunit">
    <text evidence="1">Homodimer; the beta-strands of each monomer intercalate to form a hydrophobic core, while the alpha-helices form wings that extend away from the core.</text>
</comment>
<comment type="subcellular location">
    <subcellularLocation>
        <location evidence="1">Cytoplasm</location>
    </subcellularLocation>
</comment>
<comment type="similarity">
    <text evidence="1">Belongs to the CsrA/RsmA family.</text>
</comment>
<feature type="chain" id="PRO_0000177069" description="Translational regulator CsrA">
    <location>
        <begin position="1"/>
        <end position="79"/>
    </location>
</feature>
<evidence type="ECO:0000255" key="1">
    <source>
        <dbReference type="HAMAP-Rule" id="MF_00167"/>
    </source>
</evidence>
<name>CSRA_HELHP</name>